<gene>
    <name evidence="1" type="primary">tig</name>
    <name type="ordered locus">Tgr7_0938</name>
</gene>
<feature type="chain" id="PRO_1000198186" description="Trigger factor">
    <location>
        <begin position="1"/>
        <end position="436"/>
    </location>
</feature>
<feature type="domain" description="PPIase FKBP-type" evidence="1">
    <location>
        <begin position="161"/>
        <end position="246"/>
    </location>
</feature>
<protein>
    <recommendedName>
        <fullName evidence="1">Trigger factor</fullName>
        <shortName evidence="1">TF</shortName>
        <ecNumber evidence="1">5.2.1.8</ecNumber>
    </recommendedName>
    <alternativeName>
        <fullName evidence="1">PPIase</fullName>
    </alternativeName>
</protein>
<organism>
    <name type="scientific">Thioalkalivibrio sulfidiphilus (strain HL-EbGR7)</name>
    <dbReference type="NCBI Taxonomy" id="396588"/>
    <lineage>
        <taxon>Bacteria</taxon>
        <taxon>Pseudomonadati</taxon>
        <taxon>Pseudomonadota</taxon>
        <taxon>Gammaproteobacteria</taxon>
        <taxon>Chromatiales</taxon>
        <taxon>Ectothiorhodospiraceae</taxon>
        <taxon>Thioalkalivibrio</taxon>
    </lineage>
</organism>
<keyword id="KW-0131">Cell cycle</keyword>
<keyword id="KW-0132">Cell division</keyword>
<keyword id="KW-0143">Chaperone</keyword>
<keyword id="KW-0963">Cytoplasm</keyword>
<keyword id="KW-0413">Isomerase</keyword>
<keyword id="KW-1185">Reference proteome</keyword>
<keyword id="KW-0697">Rotamase</keyword>
<reference key="1">
    <citation type="journal article" date="2011" name="Stand. Genomic Sci.">
        <title>Complete genome sequence of 'Thioalkalivibrio sulfidophilus' HL-EbGr7.</title>
        <authorList>
            <person name="Muyzer G."/>
            <person name="Sorokin D.Y."/>
            <person name="Mavromatis K."/>
            <person name="Lapidus A."/>
            <person name="Clum A."/>
            <person name="Ivanova N."/>
            <person name="Pati A."/>
            <person name="d'Haeseleer P."/>
            <person name="Woyke T."/>
            <person name="Kyrpides N.C."/>
        </authorList>
    </citation>
    <scope>NUCLEOTIDE SEQUENCE [LARGE SCALE GENOMIC DNA]</scope>
    <source>
        <strain>HL-EbGR7</strain>
    </source>
</reference>
<name>TIG_THISH</name>
<evidence type="ECO:0000255" key="1">
    <source>
        <dbReference type="HAMAP-Rule" id="MF_00303"/>
    </source>
</evidence>
<dbReference type="EC" id="5.2.1.8" evidence="1"/>
<dbReference type="EMBL" id="CP001339">
    <property type="protein sequence ID" value="ACL72026.1"/>
    <property type="molecule type" value="Genomic_DNA"/>
</dbReference>
<dbReference type="RefSeq" id="WP_012637511.1">
    <property type="nucleotide sequence ID" value="NC_011901.1"/>
</dbReference>
<dbReference type="SMR" id="B8GNT7"/>
<dbReference type="STRING" id="396588.Tgr7_0938"/>
<dbReference type="KEGG" id="tgr:Tgr7_0938"/>
<dbReference type="eggNOG" id="COG0544">
    <property type="taxonomic scope" value="Bacteria"/>
</dbReference>
<dbReference type="HOGENOM" id="CLU_033058_2_0_6"/>
<dbReference type="OrthoDB" id="9767721at2"/>
<dbReference type="Proteomes" id="UP000002383">
    <property type="component" value="Chromosome"/>
</dbReference>
<dbReference type="GO" id="GO:0005737">
    <property type="term" value="C:cytoplasm"/>
    <property type="evidence" value="ECO:0007669"/>
    <property type="project" value="UniProtKB-SubCell"/>
</dbReference>
<dbReference type="GO" id="GO:0003755">
    <property type="term" value="F:peptidyl-prolyl cis-trans isomerase activity"/>
    <property type="evidence" value="ECO:0007669"/>
    <property type="project" value="UniProtKB-UniRule"/>
</dbReference>
<dbReference type="GO" id="GO:0044183">
    <property type="term" value="F:protein folding chaperone"/>
    <property type="evidence" value="ECO:0007669"/>
    <property type="project" value="TreeGrafter"/>
</dbReference>
<dbReference type="GO" id="GO:0043022">
    <property type="term" value="F:ribosome binding"/>
    <property type="evidence" value="ECO:0007669"/>
    <property type="project" value="TreeGrafter"/>
</dbReference>
<dbReference type="GO" id="GO:0051083">
    <property type="term" value="P:'de novo' cotranslational protein folding"/>
    <property type="evidence" value="ECO:0007669"/>
    <property type="project" value="TreeGrafter"/>
</dbReference>
<dbReference type="GO" id="GO:0051301">
    <property type="term" value="P:cell division"/>
    <property type="evidence" value="ECO:0007669"/>
    <property type="project" value="UniProtKB-KW"/>
</dbReference>
<dbReference type="GO" id="GO:0061077">
    <property type="term" value="P:chaperone-mediated protein folding"/>
    <property type="evidence" value="ECO:0007669"/>
    <property type="project" value="TreeGrafter"/>
</dbReference>
<dbReference type="GO" id="GO:0015031">
    <property type="term" value="P:protein transport"/>
    <property type="evidence" value="ECO:0007669"/>
    <property type="project" value="UniProtKB-UniRule"/>
</dbReference>
<dbReference type="GO" id="GO:0043335">
    <property type="term" value="P:protein unfolding"/>
    <property type="evidence" value="ECO:0007669"/>
    <property type="project" value="TreeGrafter"/>
</dbReference>
<dbReference type="FunFam" id="3.10.50.40:FF:000001">
    <property type="entry name" value="Trigger factor"/>
    <property type="match status" value="1"/>
</dbReference>
<dbReference type="Gene3D" id="3.10.50.40">
    <property type="match status" value="1"/>
</dbReference>
<dbReference type="Gene3D" id="3.30.70.1050">
    <property type="entry name" value="Trigger factor ribosome-binding domain"/>
    <property type="match status" value="1"/>
</dbReference>
<dbReference type="Gene3D" id="1.10.3120.10">
    <property type="entry name" value="Trigger factor, C-terminal domain"/>
    <property type="match status" value="1"/>
</dbReference>
<dbReference type="HAMAP" id="MF_00303">
    <property type="entry name" value="Trigger_factor_Tig"/>
    <property type="match status" value="1"/>
</dbReference>
<dbReference type="InterPro" id="IPR046357">
    <property type="entry name" value="PPIase_dom_sf"/>
</dbReference>
<dbReference type="InterPro" id="IPR001179">
    <property type="entry name" value="PPIase_FKBP_dom"/>
</dbReference>
<dbReference type="InterPro" id="IPR005215">
    <property type="entry name" value="Trig_fac"/>
</dbReference>
<dbReference type="InterPro" id="IPR008880">
    <property type="entry name" value="Trigger_fac_C"/>
</dbReference>
<dbReference type="InterPro" id="IPR037041">
    <property type="entry name" value="Trigger_fac_C_sf"/>
</dbReference>
<dbReference type="InterPro" id="IPR008881">
    <property type="entry name" value="Trigger_fac_ribosome-bd_bac"/>
</dbReference>
<dbReference type="InterPro" id="IPR036611">
    <property type="entry name" value="Trigger_fac_ribosome-bd_sf"/>
</dbReference>
<dbReference type="InterPro" id="IPR027304">
    <property type="entry name" value="Trigger_fact/SurA_dom_sf"/>
</dbReference>
<dbReference type="NCBIfam" id="TIGR00115">
    <property type="entry name" value="tig"/>
    <property type="match status" value="1"/>
</dbReference>
<dbReference type="PANTHER" id="PTHR30560">
    <property type="entry name" value="TRIGGER FACTOR CHAPERONE AND PEPTIDYL-PROLYL CIS/TRANS ISOMERASE"/>
    <property type="match status" value="1"/>
</dbReference>
<dbReference type="PANTHER" id="PTHR30560:SF3">
    <property type="entry name" value="TRIGGER FACTOR-LIKE PROTEIN TIG, CHLOROPLASTIC"/>
    <property type="match status" value="1"/>
</dbReference>
<dbReference type="Pfam" id="PF00254">
    <property type="entry name" value="FKBP_C"/>
    <property type="match status" value="1"/>
</dbReference>
<dbReference type="Pfam" id="PF05698">
    <property type="entry name" value="Trigger_C"/>
    <property type="match status" value="1"/>
</dbReference>
<dbReference type="Pfam" id="PF05697">
    <property type="entry name" value="Trigger_N"/>
    <property type="match status" value="1"/>
</dbReference>
<dbReference type="PIRSF" id="PIRSF003095">
    <property type="entry name" value="Trigger_factor"/>
    <property type="match status" value="1"/>
</dbReference>
<dbReference type="SUPFAM" id="SSF54534">
    <property type="entry name" value="FKBP-like"/>
    <property type="match status" value="1"/>
</dbReference>
<dbReference type="SUPFAM" id="SSF109998">
    <property type="entry name" value="Triger factor/SurA peptide-binding domain-like"/>
    <property type="match status" value="1"/>
</dbReference>
<dbReference type="SUPFAM" id="SSF102735">
    <property type="entry name" value="Trigger factor ribosome-binding domain"/>
    <property type="match status" value="1"/>
</dbReference>
<dbReference type="PROSITE" id="PS50059">
    <property type="entry name" value="FKBP_PPIASE"/>
    <property type="match status" value="1"/>
</dbReference>
<comment type="function">
    <text evidence="1">Involved in protein export. Acts as a chaperone by maintaining the newly synthesized protein in an open conformation. Functions as a peptidyl-prolyl cis-trans isomerase.</text>
</comment>
<comment type="catalytic activity">
    <reaction evidence="1">
        <text>[protein]-peptidylproline (omega=180) = [protein]-peptidylproline (omega=0)</text>
        <dbReference type="Rhea" id="RHEA:16237"/>
        <dbReference type="Rhea" id="RHEA-COMP:10747"/>
        <dbReference type="Rhea" id="RHEA-COMP:10748"/>
        <dbReference type="ChEBI" id="CHEBI:83833"/>
        <dbReference type="ChEBI" id="CHEBI:83834"/>
        <dbReference type="EC" id="5.2.1.8"/>
    </reaction>
</comment>
<comment type="subcellular location">
    <subcellularLocation>
        <location>Cytoplasm</location>
    </subcellularLocation>
    <text evidence="1">About half TF is bound to the ribosome near the polypeptide exit tunnel while the other half is free in the cytoplasm.</text>
</comment>
<comment type="domain">
    <text evidence="1">Consists of 3 domains; the N-terminus binds the ribosome, the middle domain has PPIase activity, while the C-terminus has intrinsic chaperone activity on its own.</text>
</comment>
<comment type="similarity">
    <text evidence="1">Belongs to the FKBP-type PPIase family. Tig subfamily.</text>
</comment>
<sequence length="436" mass="48685">MQVSVETVSNLQRRMTVQVPSERIEQEVDRRLKSLARRVKIDGFRPGKVPLKVVQQRYGAGVFQEVVGEVLQSSYQEALLQEKLEPAGSPSIEPKPLEPGKGLEYTATFDVFPKVEIADLSDVAVERPRVEVSDADVDKVIETLRRQRKEFVAVDRAAQKGDQVIVDFDGSLDGEAFEGGKGEAMPVELGEGRMLAAFEDQLNGMKPGDEKTIDVPFPEDYPAENLKGKTAQFAIKVREVKEPTLPEVDEAFAKSFGIEEGGVEKLREDVRANMEREVAQALKAKVKDQVMQALFKAHPLELPEALVKDEIERLRQQALSRFGGQVKPENFPDEVFREEAVRRVSLGLIIRELVASKGMKVDAGRVKAELEAMAAGYEDPRQVIDYYRNNRQAQSGLEAMVLEDQVVDFVVEQGKATDKPMSFDELMNPRKEGASE</sequence>
<proteinExistence type="inferred from homology"/>
<accession>B8GNT7</accession>